<keyword id="KW-0028">Amino-acid biosynthesis</keyword>
<keyword id="KW-0963">Cytoplasm</keyword>
<keyword id="KW-0223">Dioxygenase</keyword>
<keyword id="KW-0408">Iron</keyword>
<keyword id="KW-0479">Metal-binding</keyword>
<keyword id="KW-0486">Methionine biosynthesis</keyword>
<keyword id="KW-0533">Nickel</keyword>
<keyword id="KW-0539">Nucleus</keyword>
<keyword id="KW-0560">Oxidoreductase</keyword>
<keyword id="KW-1185">Reference proteome</keyword>
<dbReference type="EC" id="1.13.11.54" evidence="1"/>
<dbReference type="EC" id="1.13.11.53" evidence="1"/>
<dbReference type="EMBL" id="Z97336">
    <property type="protein sequence ID" value="CAB10250.1"/>
    <property type="status" value="ALT_SEQ"/>
    <property type="molecule type" value="Genomic_DNA"/>
</dbReference>
<dbReference type="EMBL" id="AL161539">
    <property type="protein sequence ID" value="CAB78513.1"/>
    <property type="status" value="ALT_SEQ"/>
    <property type="molecule type" value="Genomic_DNA"/>
</dbReference>
<dbReference type="EMBL" id="CP002687">
    <property type="protein sequence ID" value="AEE83486.1"/>
    <property type="molecule type" value="Genomic_DNA"/>
</dbReference>
<dbReference type="EMBL" id="AK118285">
    <property type="protein sequence ID" value="BAC42903.1"/>
    <property type="molecule type" value="mRNA"/>
</dbReference>
<dbReference type="EMBL" id="BT004801">
    <property type="protein sequence ID" value="AAO44067.1"/>
    <property type="molecule type" value="mRNA"/>
</dbReference>
<dbReference type="EMBL" id="BT005440">
    <property type="protein sequence ID" value="AAO63860.1"/>
    <property type="molecule type" value="mRNA"/>
</dbReference>
<dbReference type="PIR" id="H71409">
    <property type="entry name" value="H71409"/>
</dbReference>
<dbReference type="SMR" id="Q8GXE2"/>
<dbReference type="BioGRID" id="12421">
    <property type="interactions" value="22"/>
</dbReference>
<dbReference type="FunCoup" id="Q8GXE2">
    <property type="interactions" value="1811"/>
</dbReference>
<dbReference type="IntAct" id="Q8GXE2">
    <property type="interactions" value="1"/>
</dbReference>
<dbReference type="STRING" id="3702.Q8GXE2"/>
<dbReference type="iPTMnet" id="Q8GXE2"/>
<dbReference type="PaxDb" id="3702-AT4G14716.1"/>
<dbReference type="ProteomicsDB" id="251305"/>
<dbReference type="EnsemblPlants" id="AT4G14716.1">
    <property type="protein sequence ID" value="AT4G14716.1"/>
    <property type="gene ID" value="AT4G14716"/>
</dbReference>
<dbReference type="Gramene" id="AT4G14716.1">
    <property type="protein sequence ID" value="AT4G14716.1"/>
    <property type="gene ID" value="AT4G14716"/>
</dbReference>
<dbReference type="KEGG" id="ath:AT4G14716"/>
<dbReference type="Araport" id="AT4G14716"/>
<dbReference type="TAIR" id="AT4G14716">
    <property type="gene designation" value="ARD1"/>
</dbReference>
<dbReference type="eggNOG" id="KOG2107">
    <property type="taxonomic scope" value="Eukaryota"/>
</dbReference>
<dbReference type="HOGENOM" id="CLU_090154_0_0_1"/>
<dbReference type="InParanoid" id="Q8GXE2"/>
<dbReference type="PhylomeDB" id="Q8GXE2"/>
<dbReference type="BioCyc" id="ARA:AT4G14716-MONOMER"/>
<dbReference type="UniPathway" id="UPA00904">
    <property type="reaction ID" value="UER00878"/>
</dbReference>
<dbReference type="PRO" id="PR:Q8GXE2"/>
<dbReference type="Proteomes" id="UP000006548">
    <property type="component" value="Chromosome 4"/>
</dbReference>
<dbReference type="ExpressionAtlas" id="Q8GXE2">
    <property type="expression patterns" value="baseline and differential"/>
</dbReference>
<dbReference type="GO" id="GO:0005829">
    <property type="term" value="C:cytosol"/>
    <property type="evidence" value="ECO:0007005"/>
    <property type="project" value="TAIR"/>
</dbReference>
<dbReference type="GO" id="GO:0005634">
    <property type="term" value="C:nucleus"/>
    <property type="evidence" value="ECO:0007669"/>
    <property type="project" value="UniProtKB-SubCell"/>
</dbReference>
<dbReference type="GO" id="GO:0010308">
    <property type="term" value="F:acireductone dioxygenase (Ni2+-requiring) activity"/>
    <property type="evidence" value="ECO:0007669"/>
    <property type="project" value="UniProtKB-UniRule"/>
</dbReference>
<dbReference type="GO" id="GO:0010309">
    <property type="term" value="F:acireductone dioxygenase [iron(II)-requiring] activity"/>
    <property type="evidence" value="ECO:0000314"/>
    <property type="project" value="TAIR"/>
</dbReference>
<dbReference type="GO" id="GO:0005506">
    <property type="term" value="F:iron ion binding"/>
    <property type="evidence" value="ECO:0000314"/>
    <property type="project" value="TAIR"/>
</dbReference>
<dbReference type="GO" id="GO:0016151">
    <property type="term" value="F:nickel cation binding"/>
    <property type="evidence" value="ECO:0007669"/>
    <property type="project" value="UniProtKB-UniRule"/>
</dbReference>
<dbReference type="GO" id="GO:0019509">
    <property type="term" value="P:L-methionine salvage from methylthioadenosine"/>
    <property type="evidence" value="ECO:0007669"/>
    <property type="project" value="UniProtKB-UniRule"/>
</dbReference>
<dbReference type="GO" id="GO:0051302">
    <property type="term" value="P:regulation of cell division"/>
    <property type="evidence" value="ECO:0000315"/>
    <property type="project" value="TAIR"/>
</dbReference>
<dbReference type="CDD" id="cd02232">
    <property type="entry name" value="cupin_ARD"/>
    <property type="match status" value="1"/>
</dbReference>
<dbReference type="FunFam" id="2.60.120.10:FF:000031">
    <property type="entry name" value="1,2-dihydroxy-3-keto-5-methylthiopentene dioxygenase"/>
    <property type="match status" value="1"/>
</dbReference>
<dbReference type="Gene3D" id="2.60.120.10">
    <property type="entry name" value="Jelly Rolls"/>
    <property type="match status" value="1"/>
</dbReference>
<dbReference type="HAMAP" id="MF_03154">
    <property type="entry name" value="Salvage_MtnD_euk"/>
    <property type="match status" value="1"/>
</dbReference>
<dbReference type="InterPro" id="IPR004313">
    <property type="entry name" value="ARD"/>
</dbReference>
<dbReference type="InterPro" id="IPR027496">
    <property type="entry name" value="ARD_euk"/>
</dbReference>
<dbReference type="InterPro" id="IPR014710">
    <property type="entry name" value="RmlC-like_jellyroll"/>
</dbReference>
<dbReference type="InterPro" id="IPR011051">
    <property type="entry name" value="RmlC_Cupin_sf"/>
</dbReference>
<dbReference type="PANTHER" id="PTHR23418">
    <property type="entry name" value="ACIREDUCTONE DIOXYGENASE"/>
    <property type="match status" value="1"/>
</dbReference>
<dbReference type="PANTHER" id="PTHR23418:SF0">
    <property type="entry name" value="ACIREDUCTONE DIOXYGENASE"/>
    <property type="match status" value="1"/>
</dbReference>
<dbReference type="Pfam" id="PF03079">
    <property type="entry name" value="ARD"/>
    <property type="match status" value="1"/>
</dbReference>
<dbReference type="SUPFAM" id="SSF51182">
    <property type="entry name" value="RmlC-like cupins"/>
    <property type="match status" value="1"/>
</dbReference>
<feature type="chain" id="PRO_0000223193" description="Acireductone dioxygenase 2">
    <location>
        <begin position="1"/>
        <end position="192"/>
    </location>
</feature>
<feature type="binding site" evidence="1">
    <location>
        <position position="99"/>
    </location>
    <ligand>
        <name>Fe(2+)</name>
        <dbReference type="ChEBI" id="CHEBI:29033"/>
        <note>for iron-dependent acireductone dioxygenase activity</note>
    </ligand>
</feature>
<feature type="binding site" evidence="1">
    <location>
        <position position="99"/>
    </location>
    <ligand>
        <name>Ni(2+)</name>
        <dbReference type="ChEBI" id="CHEBI:49786"/>
        <note>for nickel-dependent acireductone dioxygenase activity</note>
    </ligand>
</feature>
<feature type="binding site" evidence="1">
    <location>
        <position position="101"/>
    </location>
    <ligand>
        <name>Fe(2+)</name>
        <dbReference type="ChEBI" id="CHEBI:29033"/>
        <note>for iron-dependent acireductone dioxygenase activity</note>
    </ligand>
</feature>
<feature type="binding site" evidence="1">
    <location>
        <position position="101"/>
    </location>
    <ligand>
        <name>Ni(2+)</name>
        <dbReference type="ChEBI" id="CHEBI:49786"/>
        <note>for nickel-dependent acireductone dioxygenase activity</note>
    </ligand>
</feature>
<feature type="binding site" evidence="1">
    <location>
        <position position="105"/>
    </location>
    <ligand>
        <name>Fe(2+)</name>
        <dbReference type="ChEBI" id="CHEBI:29033"/>
        <note>for iron-dependent acireductone dioxygenase activity</note>
    </ligand>
</feature>
<feature type="binding site" evidence="1">
    <location>
        <position position="105"/>
    </location>
    <ligand>
        <name>Ni(2+)</name>
        <dbReference type="ChEBI" id="CHEBI:49786"/>
        <note>for nickel-dependent acireductone dioxygenase activity</note>
    </ligand>
</feature>
<feature type="binding site" evidence="1">
    <location>
        <position position="144"/>
    </location>
    <ligand>
        <name>Fe(2+)</name>
        <dbReference type="ChEBI" id="CHEBI:29033"/>
        <note>for iron-dependent acireductone dioxygenase activity</note>
    </ligand>
</feature>
<feature type="binding site" evidence="1">
    <location>
        <position position="144"/>
    </location>
    <ligand>
        <name>Ni(2+)</name>
        <dbReference type="ChEBI" id="CHEBI:49786"/>
        <note>for nickel-dependent acireductone dioxygenase activity</note>
    </ligand>
</feature>
<gene>
    <name type="primary">ARD2</name>
    <name type="ordered locus">At4g14716</name>
    <name type="ORF">dl3395c</name>
    <name type="ORF">FCAALL.100</name>
</gene>
<proteinExistence type="evidence at protein level"/>
<sequence>MGEAVKDGREEVIQAWYMDDSEEDQRLPHHKDPKEFVSLDKLAELGVLSWRLDADNYETDEDLKKIRESRGYSYMDFCEVCPEKLPNYEVKVKSFFEEHLHTDEEIRYCVAGTGYFDVRDRNEAWIRVLVKKGGMIVLPAGIYHRFTVDSDNYIKAMRLFVGEPVWTPYNRPHDHLPARKEYVDNFMINASA</sequence>
<reference key="1">
    <citation type="journal article" date="1998" name="Nature">
        <title>Analysis of 1.9 Mb of contiguous sequence from chromosome 4 of Arabidopsis thaliana.</title>
        <authorList>
            <person name="Bevan M."/>
            <person name="Bancroft I."/>
            <person name="Bent E."/>
            <person name="Love K."/>
            <person name="Goodman H.M."/>
            <person name="Dean C."/>
            <person name="Bergkamp R."/>
            <person name="Dirkse W."/>
            <person name="van Staveren M."/>
            <person name="Stiekema W."/>
            <person name="Drost L."/>
            <person name="Ridley P."/>
            <person name="Hudson S.-A."/>
            <person name="Patel K."/>
            <person name="Murphy G."/>
            <person name="Piffanelli P."/>
            <person name="Wedler H."/>
            <person name="Wedler E."/>
            <person name="Wambutt R."/>
            <person name="Weitzenegger T."/>
            <person name="Pohl T."/>
            <person name="Terryn N."/>
            <person name="Gielen J."/>
            <person name="Villarroel R."/>
            <person name="De Clercq R."/>
            <person name="van Montagu M."/>
            <person name="Lecharny A."/>
            <person name="Aubourg S."/>
            <person name="Gy I."/>
            <person name="Kreis M."/>
            <person name="Lao N."/>
            <person name="Kavanagh T."/>
            <person name="Hempel S."/>
            <person name="Kotter P."/>
            <person name="Entian K.-D."/>
            <person name="Rieger M."/>
            <person name="Schaefer M."/>
            <person name="Funk B."/>
            <person name="Mueller-Auer S."/>
            <person name="Silvey M."/>
            <person name="James R."/>
            <person name="Monfort A."/>
            <person name="Pons A."/>
            <person name="Puigdomenech P."/>
            <person name="Douka A."/>
            <person name="Voukelatou E."/>
            <person name="Milioni D."/>
            <person name="Hatzopoulos P."/>
            <person name="Piravandi E."/>
            <person name="Obermaier B."/>
            <person name="Hilbert H."/>
            <person name="Duesterhoeft A."/>
            <person name="Moores T."/>
            <person name="Jones J.D.G."/>
            <person name="Eneva T."/>
            <person name="Palme K."/>
            <person name="Benes V."/>
            <person name="Rechmann S."/>
            <person name="Ansorge W."/>
            <person name="Cooke R."/>
            <person name="Berger C."/>
            <person name="Delseny M."/>
            <person name="Voet M."/>
            <person name="Volckaert G."/>
            <person name="Mewes H.-W."/>
            <person name="Klosterman S."/>
            <person name="Schueller C."/>
            <person name="Chalwatzis N."/>
        </authorList>
    </citation>
    <scope>NUCLEOTIDE SEQUENCE [LARGE SCALE GENOMIC DNA]</scope>
    <source>
        <strain>cv. Columbia</strain>
    </source>
</reference>
<reference key="2">
    <citation type="journal article" date="1999" name="Nature">
        <title>Sequence and analysis of chromosome 4 of the plant Arabidopsis thaliana.</title>
        <authorList>
            <person name="Mayer K.F.X."/>
            <person name="Schueller C."/>
            <person name="Wambutt R."/>
            <person name="Murphy G."/>
            <person name="Volckaert G."/>
            <person name="Pohl T."/>
            <person name="Duesterhoeft A."/>
            <person name="Stiekema W."/>
            <person name="Entian K.-D."/>
            <person name="Terryn N."/>
            <person name="Harris B."/>
            <person name="Ansorge W."/>
            <person name="Brandt P."/>
            <person name="Grivell L.A."/>
            <person name="Rieger M."/>
            <person name="Weichselgartner M."/>
            <person name="de Simone V."/>
            <person name="Obermaier B."/>
            <person name="Mache R."/>
            <person name="Mueller M."/>
            <person name="Kreis M."/>
            <person name="Delseny M."/>
            <person name="Puigdomenech P."/>
            <person name="Watson M."/>
            <person name="Schmidtheini T."/>
            <person name="Reichert B."/>
            <person name="Portetelle D."/>
            <person name="Perez-Alonso M."/>
            <person name="Boutry M."/>
            <person name="Bancroft I."/>
            <person name="Vos P."/>
            <person name="Hoheisel J."/>
            <person name="Zimmermann W."/>
            <person name="Wedler H."/>
            <person name="Ridley P."/>
            <person name="Langham S.-A."/>
            <person name="McCullagh B."/>
            <person name="Bilham L."/>
            <person name="Robben J."/>
            <person name="van der Schueren J."/>
            <person name="Grymonprez B."/>
            <person name="Chuang Y.-J."/>
            <person name="Vandenbussche F."/>
            <person name="Braeken M."/>
            <person name="Weltjens I."/>
            <person name="Voet M."/>
            <person name="Bastiaens I."/>
            <person name="Aert R."/>
            <person name="Defoor E."/>
            <person name="Weitzenegger T."/>
            <person name="Bothe G."/>
            <person name="Ramsperger U."/>
            <person name="Hilbert H."/>
            <person name="Braun M."/>
            <person name="Holzer E."/>
            <person name="Brandt A."/>
            <person name="Peters S."/>
            <person name="van Staveren M."/>
            <person name="Dirkse W."/>
            <person name="Mooijman P."/>
            <person name="Klein Lankhorst R."/>
            <person name="Rose M."/>
            <person name="Hauf J."/>
            <person name="Koetter P."/>
            <person name="Berneiser S."/>
            <person name="Hempel S."/>
            <person name="Feldpausch M."/>
            <person name="Lamberth S."/>
            <person name="Van den Daele H."/>
            <person name="De Keyser A."/>
            <person name="Buysshaert C."/>
            <person name="Gielen J."/>
            <person name="Villarroel R."/>
            <person name="De Clercq R."/>
            <person name="van Montagu M."/>
            <person name="Rogers J."/>
            <person name="Cronin A."/>
            <person name="Quail M.A."/>
            <person name="Bray-Allen S."/>
            <person name="Clark L."/>
            <person name="Doggett J."/>
            <person name="Hall S."/>
            <person name="Kay M."/>
            <person name="Lennard N."/>
            <person name="McLay K."/>
            <person name="Mayes R."/>
            <person name="Pettett A."/>
            <person name="Rajandream M.A."/>
            <person name="Lyne M."/>
            <person name="Benes V."/>
            <person name="Rechmann S."/>
            <person name="Borkova D."/>
            <person name="Bloecker H."/>
            <person name="Scharfe M."/>
            <person name="Grimm M."/>
            <person name="Loehnert T.-H."/>
            <person name="Dose S."/>
            <person name="de Haan M."/>
            <person name="Maarse A.C."/>
            <person name="Schaefer M."/>
            <person name="Mueller-Auer S."/>
            <person name="Gabel C."/>
            <person name="Fuchs M."/>
            <person name="Fartmann B."/>
            <person name="Granderath K."/>
            <person name="Dauner D."/>
            <person name="Herzl A."/>
            <person name="Neumann S."/>
            <person name="Argiriou A."/>
            <person name="Vitale D."/>
            <person name="Liguori R."/>
            <person name="Piravandi E."/>
            <person name="Massenet O."/>
            <person name="Quigley F."/>
            <person name="Clabauld G."/>
            <person name="Muendlein A."/>
            <person name="Felber R."/>
            <person name="Schnabl S."/>
            <person name="Hiller R."/>
            <person name="Schmidt W."/>
            <person name="Lecharny A."/>
            <person name="Aubourg S."/>
            <person name="Chefdor F."/>
            <person name="Cooke R."/>
            <person name="Berger C."/>
            <person name="Monfort A."/>
            <person name="Casacuberta E."/>
            <person name="Gibbons T."/>
            <person name="Weber N."/>
            <person name="Vandenbol M."/>
            <person name="Bargues M."/>
            <person name="Terol J."/>
            <person name="Torres A."/>
            <person name="Perez-Perez A."/>
            <person name="Purnelle B."/>
            <person name="Bent E."/>
            <person name="Johnson S."/>
            <person name="Tacon D."/>
            <person name="Jesse T."/>
            <person name="Heijnen L."/>
            <person name="Schwarz S."/>
            <person name="Scholler P."/>
            <person name="Heber S."/>
            <person name="Francs P."/>
            <person name="Bielke C."/>
            <person name="Frishman D."/>
            <person name="Haase D."/>
            <person name="Lemcke K."/>
            <person name="Mewes H.-W."/>
            <person name="Stocker S."/>
            <person name="Zaccaria P."/>
            <person name="Bevan M."/>
            <person name="Wilson R.K."/>
            <person name="de la Bastide M."/>
            <person name="Habermann K."/>
            <person name="Parnell L."/>
            <person name="Dedhia N."/>
            <person name="Gnoj L."/>
            <person name="Schutz K."/>
            <person name="Huang E."/>
            <person name="Spiegel L."/>
            <person name="Sekhon M."/>
            <person name="Murray J."/>
            <person name="Sheet P."/>
            <person name="Cordes M."/>
            <person name="Abu-Threideh J."/>
            <person name="Stoneking T."/>
            <person name="Kalicki J."/>
            <person name="Graves T."/>
            <person name="Harmon G."/>
            <person name="Edwards J."/>
            <person name="Latreille P."/>
            <person name="Courtney L."/>
            <person name="Cloud J."/>
            <person name="Abbott A."/>
            <person name="Scott K."/>
            <person name="Johnson D."/>
            <person name="Minx P."/>
            <person name="Bentley D."/>
            <person name="Fulton B."/>
            <person name="Miller N."/>
            <person name="Greco T."/>
            <person name="Kemp K."/>
            <person name="Kramer J."/>
            <person name="Fulton L."/>
            <person name="Mardis E."/>
            <person name="Dante M."/>
            <person name="Pepin K."/>
            <person name="Hillier L.W."/>
            <person name="Nelson J."/>
            <person name="Spieth J."/>
            <person name="Ryan E."/>
            <person name="Andrews S."/>
            <person name="Geisel C."/>
            <person name="Layman D."/>
            <person name="Du H."/>
            <person name="Ali J."/>
            <person name="Berghoff A."/>
            <person name="Jones K."/>
            <person name="Drone K."/>
            <person name="Cotton M."/>
            <person name="Joshu C."/>
            <person name="Antonoiu B."/>
            <person name="Zidanic M."/>
            <person name="Strong C."/>
            <person name="Sun H."/>
            <person name="Lamar B."/>
            <person name="Yordan C."/>
            <person name="Ma P."/>
            <person name="Zhong J."/>
            <person name="Preston R."/>
            <person name="Vil D."/>
            <person name="Shekher M."/>
            <person name="Matero A."/>
            <person name="Shah R."/>
            <person name="Swaby I.K."/>
            <person name="O'Shaughnessy A."/>
            <person name="Rodriguez M."/>
            <person name="Hoffman J."/>
            <person name="Till S."/>
            <person name="Granat S."/>
            <person name="Shohdy N."/>
            <person name="Hasegawa A."/>
            <person name="Hameed A."/>
            <person name="Lodhi M."/>
            <person name="Johnson A."/>
            <person name="Chen E."/>
            <person name="Marra M.A."/>
            <person name="Martienssen R."/>
            <person name="McCombie W.R."/>
        </authorList>
    </citation>
    <scope>NUCLEOTIDE SEQUENCE [LARGE SCALE GENOMIC DNA]</scope>
    <source>
        <strain>cv. Columbia</strain>
    </source>
</reference>
<reference key="3">
    <citation type="journal article" date="2017" name="Plant J.">
        <title>Araport11: a complete reannotation of the Arabidopsis thaliana reference genome.</title>
        <authorList>
            <person name="Cheng C.Y."/>
            <person name="Krishnakumar V."/>
            <person name="Chan A.P."/>
            <person name="Thibaud-Nissen F."/>
            <person name="Schobel S."/>
            <person name="Town C.D."/>
        </authorList>
    </citation>
    <scope>GENOME REANNOTATION</scope>
    <source>
        <strain>cv. Columbia</strain>
    </source>
</reference>
<reference key="4">
    <citation type="journal article" date="2002" name="Science">
        <title>Functional annotation of a full-length Arabidopsis cDNA collection.</title>
        <authorList>
            <person name="Seki M."/>
            <person name="Narusaka M."/>
            <person name="Kamiya A."/>
            <person name="Ishida J."/>
            <person name="Satou M."/>
            <person name="Sakurai T."/>
            <person name="Nakajima M."/>
            <person name="Enju A."/>
            <person name="Akiyama K."/>
            <person name="Oono Y."/>
            <person name="Muramatsu M."/>
            <person name="Hayashizaki Y."/>
            <person name="Kawai J."/>
            <person name="Carninci P."/>
            <person name="Itoh M."/>
            <person name="Ishii Y."/>
            <person name="Arakawa T."/>
            <person name="Shibata K."/>
            <person name="Shinagawa A."/>
            <person name="Shinozaki K."/>
        </authorList>
    </citation>
    <scope>NUCLEOTIDE SEQUENCE [LARGE SCALE MRNA]</scope>
    <source>
        <strain>cv. Columbia</strain>
    </source>
</reference>
<reference key="5">
    <citation type="journal article" date="2003" name="Science">
        <title>Empirical analysis of transcriptional activity in the Arabidopsis genome.</title>
        <authorList>
            <person name="Yamada K."/>
            <person name="Lim J."/>
            <person name="Dale J.M."/>
            <person name="Chen H."/>
            <person name="Shinn P."/>
            <person name="Palm C.J."/>
            <person name="Southwick A.M."/>
            <person name="Wu H.C."/>
            <person name="Kim C.J."/>
            <person name="Nguyen M."/>
            <person name="Pham P.K."/>
            <person name="Cheuk R.F."/>
            <person name="Karlin-Newmann G."/>
            <person name="Liu S.X."/>
            <person name="Lam B."/>
            <person name="Sakano H."/>
            <person name="Wu T."/>
            <person name="Yu G."/>
            <person name="Miranda M."/>
            <person name="Quach H.L."/>
            <person name="Tripp M."/>
            <person name="Chang C.H."/>
            <person name="Lee J.M."/>
            <person name="Toriumi M.J."/>
            <person name="Chan M.M."/>
            <person name="Tang C.C."/>
            <person name="Onodera C.S."/>
            <person name="Deng J.M."/>
            <person name="Akiyama K."/>
            <person name="Ansari Y."/>
            <person name="Arakawa T."/>
            <person name="Banh J."/>
            <person name="Banno F."/>
            <person name="Bowser L."/>
            <person name="Brooks S.Y."/>
            <person name="Carninci P."/>
            <person name="Chao Q."/>
            <person name="Choy N."/>
            <person name="Enju A."/>
            <person name="Goldsmith A.D."/>
            <person name="Gurjal M."/>
            <person name="Hansen N.F."/>
            <person name="Hayashizaki Y."/>
            <person name="Johnson-Hopson C."/>
            <person name="Hsuan V.W."/>
            <person name="Iida K."/>
            <person name="Karnes M."/>
            <person name="Khan S."/>
            <person name="Koesema E."/>
            <person name="Ishida J."/>
            <person name="Jiang P.X."/>
            <person name="Jones T."/>
            <person name="Kawai J."/>
            <person name="Kamiya A."/>
            <person name="Meyers C."/>
            <person name="Nakajima M."/>
            <person name="Narusaka M."/>
            <person name="Seki M."/>
            <person name="Sakurai T."/>
            <person name="Satou M."/>
            <person name="Tamse R."/>
            <person name="Vaysberg M."/>
            <person name="Wallender E.K."/>
            <person name="Wong C."/>
            <person name="Yamamura Y."/>
            <person name="Yuan S."/>
            <person name="Shinozaki K."/>
            <person name="Davis R.W."/>
            <person name="Theologis A."/>
            <person name="Ecker J.R."/>
        </authorList>
    </citation>
    <scope>NUCLEOTIDE SEQUENCE [LARGE SCALE MRNA]</scope>
    <source>
        <strain>cv. Columbia</strain>
    </source>
</reference>
<evidence type="ECO:0000255" key="1">
    <source>
        <dbReference type="HAMAP-Rule" id="MF_03154"/>
    </source>
</evidence>
<evidence type="ECO:0000305" key="2"/>
<organism>
    <name type="scientific">Arabidopsis thaliana</name>
    <name type="common">Mouse-ear cress</name>
    <dbReference type="NCBI Taxonomy" id="3702"/>
    <lineage>
        <taxon>Eukaryota</taxon>
        <taxon>Viridiplantae</taxon>
        <taxon>Streptophyta</taxon>
        <taxon>Embryophyta</taxon>
        <taxon>Tracheophyta</taxon>
        <taxon>Spermatophyta</taxon>
        <taxon>Magnoliopsida</taxon>
        <taxon>eudicotyledons</taxon>
        <taxon>Gunneridae</taxon>
        <taxon>Pentapetalae</taxon>
        <taxon>rosids</taxon>
        <taxon>malvids</taxon>
        <taxon>Brassicales</taxon>
        <taxon>Brassicaceae</taxon>
        <taxon>Camelineae</taxon>
        <taxon>Arabidopsis</taxon>
    </lineage>
</organism>
<protein>
    <recommendedName>
        <fullName evidence="1">Acireductone dioxygenase 2</fullName>
    </recommendedName>
    <alternativeName>
        <fullName evidence="1">Acireductone dioxygenase (Fe(2+)-requiring) 2</fullName>
        <shortName evidence="1">ARD' 2</shortName>
        <shortName evidence="1">Fe-ARD 2</shortName>
        <ecNumber evidence="1">1.13.11.54</ecNumber>
    </alternativeName>
    <alternativeName>
        <fullName evidence="1">Acireductone dioxygenase (Ni(2+)-requiring) 2</fullName>
        <shortName evidence="1">ARD 2</shortName>
        <shortName evidence="1">Ni-ARD 2</shortName>
        <ecNumber evidence="1">1.13.11.53</ecNumber>
    </alternativeName>
</protein>
<comment type="function">
    <text evidence="1">Catalyzes 2 different reactions between oxygen and the acireductone 1,2-dihydroxy-3-keto-5-methylthiopentene (DHK-MTPene) depending upon the metal bound in the active site. Fe-containing acireductone dioxygenase (Fe-ARD) produces formate and 2-keto-4-methylthiobutyrate (KMTB), the alpha-ketoacid precursor of methionine in the methionine recycle pathway. Ni-containing acireductone dioxygenase (Ni-ARD) produces methylthiopropionate, carbon monoxide and formate, and does not lie on the methionine recycle pathway.</text>
</comment>
<comment type="catalytic activity">
    <reaction evidence="1">
        <text>1,2-dihydroxy-5-(methylsulfanyl)pent-1-en-3-one + O2 = 4-methylsulfanyl-2-oxobutanoate + formate + 2 H(+)</text>
        <dbReference type="Rhea" id="RHEA:24504"/>
        <dbReference type="ChEBI" id="CHEBI:15378"/>
        <dbReference type="ChEBI" id="CHEBI:15379"/>
        <dbReference type="ChEBI" id="CHEBI:15740"/>
        <dbReference type="ChEBI" id="CHEBI:16723"/>
        <dbReference type="ChEBI" id="CHEBI:49252"/>
        <dbReference type="EC" id="1.13.11.54"/>
    </reaction>
</comment>
<comment type="catalytic activity">
    <reaction evidence="1">
        <text>1,2-dihydroxy-5-(methylsulfanyl)pent-1-en-3-one + O2 = 3-(methylsulfanyl)propanoate + CO + formate + 2 H(+)</text>
        <dbReference type="Rhea" id="RHEA:14161"/>
        <dbReference type="ChEBI" id="CHEBI:15378"/>
        <dbReference type="ChEBI" id="CHEBI:15379"/>
        <dbReference type="ChEBI" id="CHEBI:15740"/>
        <dbReference type="ChEBI" id="CHEBI:17245"/>
        <dbReference type="ChEBI" id="CHEBI:49016"/>
        <dbReference type="ChEBI" id="CHEBI:49252"/>
        <dbReference type="EC" id="1.13.11.53"/>
    </reaction>
</comment>
<comment type="cofactor">
    <cofactor evidence="1">
        <name>Fe(2+)</name>
        <dbReference type="ChEBI" id="CHEBI:29033"/>
    </cofactor>
    <cofactor evidence="1">
        <name>Ni(2+)</name>
        <dbReference type="ChEBI" id="CHEBI:49786"/>
    </cofactor>
    <text evidence="1">Binds either 1 Fe or Ni cation per monomer. Iron-binding promotes an acireductone dioxygenase reaction producing 2-keto-4-methylthiobutyrate, while nickel-binding promotes an acireductone dioxygenase reaction producing 3-(methylsulfanyl)propanoate.</text>
</comment>
<comment type="pathway">
    <text evidence="1">Amino-acid biosynthesis; L-methionine biosynthesis via salvage pathway; L-methionine from S-methyl-5-thio-alpha-D-ribose 1-phosphate: step 5/6.</text>
</comment>
<comment type="interaction">
    <interactant intactId="EBI-25520531">
        <id>Q8GXE2</id>
    </interactant>
    <interactant intactId="EBI-25513590">
        <id>A0A178U6D3</id>
        <label>AXX17_At5g41910</label>
    </interactant>
    <organismsDiffer>false</organismsDiffer>
    <experiments>3</experiments>
</comment>
<comment type="subcellular location">
    <subcellularLocation>
        <location evidence="1">Cytoplasm</location>
    </subcellularLocation>
    <subcellularLocation>
        <location evidence="1">Nucleus</location>
    </subcellularLocation>
</comment>
<comment type="similarity">
    <text evidence="1">Belongs to the acireductone dioxygenase (ARD) family.</text>
</comment>
<comment type="sequence caution" evidence="2">
    <conflict type="erroneous gene model prediction">
        <sequence resource="EMBL-CDS" id="CAB10250"/>
    </conflict>
    <text>The predicted gene At4g14710 has been split into 2 genes: At4g14710 and At4g14716.</text>
</comment>
<comment type="sequence caution" evidence="2">
    <conflict type="erroneous gene model prediction">
        <sequence resource="EMBL-CDS" id="CAB78513"/>
    </conflict>
    <text>The predicted gene At4g14710 has been split into 2 genes: At4g14710 and At4g14716.</text>
</comment>
<accession>Q8GXE2</accession>
<accession>O23327</accession>
<name>MTND2_ARATH</name>